<feature type="chain" id="PRO_0000166569" description="Bifunctional (p)ppGpp synthase/hydrolase SpoT">
    <location>
        <begin position="1"/>
        <end position="702"/>
    </location>
</feature>
<feature type="domain" description="HD" evidence="2">
    <location>
        <begin position="45"/>
        <end position="144"/>
    </location>
</feature>
<feature type="domain" description="TGS" evidence="3">
    <location>
        <begin position="386"/>
        <end position="447"/>
    </location>
</feature>
<feature type="domain" description="ACT" evidence="1">
    <location>
        <begin position="628"/>
        <end position="702"/>
    </location>
</feature>
<feature type="mutagenesis site" description="Obviates hydrolysis of ppGpp, moderately decreases biofilm formation, loss of biofilm induction in response to translation inhibitors." evidence="8">
    <original>D</original>
    <variation>N</variation>
    <location>
        <position position="73"/>
    </location>
</feature>
<feature type="mutagenesis site" description="Obviates synthesis of ppGpp, strongly increases biofilm formation." evidence="8">
    <original>D</original>
    <variation>N</variation>
    <location>
        <position position="259"/>
    </location>
</feature>
<feature type="mutagenesis site" description="Unable to restore (p)ppGpp synthesis nor complement a relA/spoT double disruption." evidence="4">
    <original>D</original>
    <variation>A</variation>
    <location>
        <position position="293"/>
    </location>
</feature>
<feature type="mutagenesis site" description="Synthesizes (p)ppGpp, complements a relA/spoT double disruption.">
    <original>Y</original>
    <variation>I</variation>
    <location>
        <position position="294"/>
    </location>
</feature>
<sequence length="702" mass="79342">MYLFESLNQLIQTYLPEDQIKRLRQAYLVARDAHEGQTRSSGEPYITHPVAVACILAEMKLDYETLMAALLHDVIEDTPATYQDMEQLFGKSVAELVEGVSKLDKLKFRDKKEAQAENFRKMIMAMVQDIRVILIKLADRTHNMRTLGSLRPDKRRRIARETLEIYSPLAHRLGIHHIKTELEELGFEALYPNRYRVIKEVVKAARGNRKEMIQKILSEIEGRLQEAGIPCRVSGREKHLYSIYCKMVLKEQRFHSIMDIYAFRVIVNDSDTCYRVLGQMHSLYKPRPGRVKDYIAIPKANGYQSLHTSMIGPHGVPVEVQIRTEDMDQMAEMGVAAHWAYKEHGETSTTAQIRAQRWMQSLLELQQSAGSSFEFIESVKSDLFPDEIYVFTPEGRIVELPAGATPVDFAYAVHTDIGHACVGARVDRQPYPLSQPLTSGQTVEIITAPGARPNAAWLNFVVSSKARAKIRQLLKNLKRDDSVSLGRRLLNHALGGSRKLNEIPQENIQRELDRMKLATLDDLLAEIGLGNAMSVVVAKNLQHGDASIPPATQSHGHLPIKGADGVLITFAKCCRPIPGDPIIAHVSPGKGLVIHHESCRNIRGYQKEPEKFMAVEWDKETAQEFITEIKVEMFNHQGALANLTAAINTTTSNIQSLNTEEKDGRVYSAFIRLTARDRVHLANIMRKIRVMPDVIKVTRNRN</sequence>
<comment type="function">
    <text evidence="5 8 9">In eubacteria ppGpp (guanosine 3'-diphosphate 5'-diphosphate) is a mediator of the stringent response which coordinates a variety of cellular activities in response to changes in nutritional abundance. This enzyme catalyzes both the synthesis and degradation of ppGpp. The second messengers ppGpp and c-di-GMP together control biofilm formation in response to translational stress; ppGpp represses biofilm formation while c-di-GMP induces it. ppGpp activates transcription of CsrA-antagonistic small RNAs CsrB and CsrC, which down-regulate CsrA's action on translation during the stringent response (PubMed:21488981).</text>
</comment>
<comment type="catalytic activity">
    <reaction>
        <text>GTP + ATP = guanosine 3'-diphosphate 5'-triphosphate + AMP</text>
        <dbReference type="Rhea" id="RHEA:22088"/>
        <dbReference type="ChEBI" id="CHEBI:30616"/>
        <dbReference type="ChEBI" id="CHEBI:37565"/>
        <dbReference type="ChEBI" id="CHEBI:142410"/>
        <dbReference type="ChEBI" id="CHEBI:456215"/>
        <dbReference type="EC" id="2.7.6.5"/>
    </reaction>
</comment>
<comment type="catalytic activity">
    <reaction>
        <text>guanosine 3',5'-bis(diphosphate) + H2O = GDP + diphosphate + H(+)</text>
        <dbReference type="Rhea" id="RHEA:14253"/>
        <dbReference type="ChEBI" id="CHEBI:15377"/>
        <dbReference type="ChEBI" id="CHEBI:15378"/>
        <dbReference type="ChEBI" id="CHEBI:33019"/>
        <dbReference type="ChEBI" id="CHEBI:58189"/>
        <dbReference type="ChEBI" id="CHEBI:77828"/>
        <dbReference type="EC" id="3.1.7.2"/>
    </reaction>
</comment>
<comment type="cofactor">
    <cofactor>
        <name>Mn(2+)</name>
        <dbReference type="ChEBI" id="CHEBI:29035"/>
    </cofactor>
</comment>
<comment type="pathway">
    <text>Purine metabolism; ppGpp biosynthesis; ppGpp from GDP: step 1/1.</text>
</comment>
<comment type="pathway">
    <text>Purine metabolism; ppGpp biosynthesis; ppGpp from GTP: step 1/2.</text>
</comment>
<comment type="subunit">
    <text evidence="6">Interacts with ObgE/CgtA (AC P42641); this association is not required for pre-50S ribosome binding. Under both amino acid and carbon starvation conditions about half of the protein dissociates from the ribosome.</text>
</comment>
<comment type="interaction">
    <interactant intactId="EBI-543228">
        <id>P0AG24</id>
    </interactant>
    <interactant intactId="EBI-542566">
        <id>P0A6A8</id>
        <label>acpP</label>
    </interactant>
    <organismsDiffer>false</organismsDiffer>
    <experiments>6</experiments>
</comment>
<comment type="subcellular location">
    <subcellularLocation>
        <location evidence="7">Cytoplasm</location>
    </subcellularLocation>
    <text>Is associated with pre-50S ribosomal subunits in a salt-dependent manner.</text>
</comment>
<comment type="disruption phenotype">
    <text evidence="5 8 9 10">In the presence of wild-type relA, spoT cannot be deleted because ppGpp accumulation is toxic. In the double relA/spoT deletion (a ppGpp0 mutant) there is a very large increase in biofilm formation (in a csrA-disrupted background) (PubMed:19460094). The ppGpp0 mutant makes decreased levels of CsrA and its inhibitory small RNAs (sRNA) CsrB and CsrC (PubMed:21488981). The double relA/spoT deletion obviates persister cell formation in a hipA7 mutant (PubMed:14622409, PubMed:26051177).</text>
</comment>
<comment type="similarity">
    <text evidence="11">Belongs to the RelA/SpoT family.</text>
</comment>
<proteinExistence type="evidence at protein level"/>
<accession>P0AG24</accession>
<accession>P17580</accession>
<accession>Q2M7W3</accession>
<organism>
    <name type="scientific">Escherichia coli (strain K12)</name>
    <dbReference type="NCBI Taxonomy" id="83333"/>
    <lineage>
        <taxon>Bacteria</taxon>
        <taxon>Pseudomonadati</taxon>
        <taxon>Pseudomonadota</taxon>
        <taxon>Gammaproteobacteria</taxon>
        <taxon>Enterobacterales</taxon>
        <taxon>Enterobacteriaceae</taxon>
        <taxon>Escherichia</taxon>
    </lineage>
</organism>
<name>SPOT_ECOLI</name>
<evidence type="ECO:0000255" key="1">
    <source>
        <dbReference type="PROSITE-ProRule" id="PRU01007"/>
    </source>
</evidence>
<evidence type="ECO:0000255" key="2">
    <source>
        <dbReference type="PROSITE-ProRule" id="PRU01175"/>
    </source>
</evidence>
<evidence type="ECO:0000255" key="3">
    <source>
        <dbReference type="PROSITE-ProRule" id="PRU01228"/>
    </source>
</evidence>
<evidence type="ECO:0000269" key="4">
    <source>
    </source>
</evidence>
<evidence type="ECO:0000269" key="5">
    <source>
    </source>
</evidence>
<evidence type="ECO:0000269" key="6">
    <source>
    </source>
</evidence>
<evidence type="ECO:0000269" key="7">
    <source>
    </source>
</evidence>
<evidence type="ECO:0000269" key="8">
    <source>
    </source>
</evidence>
<evidence type="ECO:0000269" key="9">
    <source>
    </source>
</evidence>
<evidence type="ECO:0000269" key="10">
    <source>
    </source>
</evidence>
<evidence type="ECO:0000305" key="11"/>
<protein>
    <recommendedName>
        <fullName>Bifunctional (p)ppGpp synthase/hydrolase SpoT</fullName>
    </recommendedName>
    <domain>
        <recommendedName>
            <fullName>GTP pyrophosphokinase</fullName>
            <ecNumber>2.7.6.5</ecNumber>
        </recommendedName>
        <alternativeName>
            <fullName>(p)ppGpp synthase</fullName>
        </alternativeName>
        <alternativeName>
            <fullName>ATP:GTP 3'-pyrophosphotransferase</fullName>
        </alternativeName>
        <alternativeName>
            <fullName>Stringent response-like protein</fullName>
        </alternativeName>
        <alternativeName>
            <fullName>ppGpp synthase II</fullName>
        </alternativeName>
    </domain>
    <domain>
        <recommendedName>
            <fullName>Guanosine-3',5'-bis(diphosphate) 3'-pyrophosphohydrolase</fullName>
            <ecNumber>3.1.7.2</ecNumber>
        </recommendedName>
        <alternativeName>
            <fullName>Penta-phosphate guanosine-3'-pyrophosphohydrolase</fullName>
            <shortName>(ppGpp)ase</shortName>
        </alternativeName>
    </domain>
</protein>
<dbReference type="EC" id="2.7.6.5"/>
<dbReference type="EC" id="3.1.7.2"/>
<dbReference type="EMBL" id="M24503">
    <property type="protein sequence ID" value="AAB00160.1"/>
    <property type="molecule type" value="Genomic_DNA"/>
</dbReference>
<dbReference type="EMBL" id="L10328">
    <property type="protein sequence ID" value="AAA62003.1"/>
    <property type="molecule type" value="Genomic_DNA"/>
</dbReference>
<dbReference type="EMBL" id="U00096">
    <property type="protein sequence ID" value="AAC76674.1"/>
    <property type="molecule type" value="Genomic_DNA"/>
</dbReference>
<dbReference type="EMBL" id="AP009048">
    <property type="protein sequence ID" value="BAE77643.1"/>
    <property type="molecule type" value="Genomic_DNA"/>
</dbReference>
<dbReference type="PIR" id="B30374">
    <property type="entry name" value="SHECGD"/>
</dbReference>
<dbReference type="RefSeq" id="NP_418107.1">
    <property type="nucleotide sequence ID" value="NC_000913.3"/>
</dbReference>
<dbReference type="RefSeq" id="WP_000280488.1">
    <property type="nucleotide sequence ID" value="NZ_STEB01000024.1"/>
</dbReference>
<dbReference type="SMR" id="P0AG24"/>
<dbReference type="BioGRID" id="4259361">
    <property type="interactions" value="497"/>
</dbReference>
<dbReference type="DIP" id="DIP-29378N"/>
<dbReference type="FunCoup" id="P0AG24">
    <property type="interactions" value="777"/>
</dbReference>
<dbReference type="IntAct" id="P0AG24">
    <property type="interactions" value="61"/>
</dbReference>
<dbReference type="STRING" id="511145.b3650"/>
<dbReference type="jPOST" id="P0AG24"/>
<dbReference type="PaxDb" id="511145-b3650"/>
<dbReference type="EnsemblBacteria" id="AAC76674">
    <property type="protein sequence ID" value="AAC76674"/>
    <property type="gene ID" value="b3650"/>
</dbReference>
<dbReference type="GeneID" id="93778365"/>
<dbReference type="GeneID" id="948159"/>
<dbReference type="KEGG" id="ecj:JW3625"/>
<dbReference type="KEGG" id="eco:b3650"/>
<dbReference type="PATRIC" id="fig|1411691.4.peg.3056"/>
<dbReference type="EchoBASE" id="EB0959"/>
<dbReference type="eggNOG" id="COG0317">
    <property type="taxonomic scope" value="Bacteria"/>
</dbReference>
<dbReference type="HOGENOM" id="CLU_012300_3_0_6"/>
<dbReference type="InParanoid" id="P0AG24"/>
<dbReference type="OMA" id="PIDFAYS"/>
<dbReference type="PhylomeDB" id="P0AG24"/>
<dbReference type="BioCyc" id="EcoCyc:SPOT-MONOMER"/>
<dbReference type="BioCyc" id="MetaCyc:SPOT-MONOMER"/>
<dbReference type="BRENDA" id="2.7.6.5">
    <property type="organism ID" value="2026"/>
</dbReference>
<dbReference type="BRENDA" id="3.1.7.2">
    <property type="organism ID" value="2026"/>
</dbReference>
<dbReference type="UniPathway" id="UPA00908">
    <property type="reaction ID" value="UER00884"/>
</dbReference>
<dbReference type="UniPathway" id="UPA00908">
    <property type="reaction ID" value="UER00886"/>
</dbReference>
<dbReference type="PRO" id="PR:P0AG24"/>
<dbReference type="Proteomes" id="UP000000625">
    <property type="component" value="Chromosome"/>
</dbReference>
<dbReference type="GO" id="GO:0005829">
    <property type="term" value="C:cytosol"/>
    <property type="evidence" value="ECO:0000314"/>
    <property type="project" value="EcoCyc"/>
</dbReference>
<dbReference type="GO" id="GO:0008728">
    <property type="term" value="F:GTP diphosphokinase activity"/>
    <property type="evidence" value="ECO:0000318"/>
    <property type="project" value="GO_Central"/>
</dbReference>
<dbReference type="GO" id="GO:0008893">
    <property type="term" value="F:guanosine-3',5'-bis(diphosphate) 3'-diphosphatase activity"/>
    <property type="evidence" value="ECO:0000314"/>
    <property type="project" value="EcoCyc"/>
</dbReference>
<dbReference type="GO" id="GO:0016301">
    <property type="term" value="F:kinase activity"/>
    <property type="evidence" value="ECO:0007669"/>
    <property type="project" value="UniProtKB-KW"/>
</dbReference>
<dbReference type="GO" id="GO:0015970">
    <property type="term" value="P:guanosine tetraphosphate biosynthetic process"/>
    <property type="evidence" value="ECO:0007669"/>
    <property type="project" value="UniProtKB-UniPathway"/>
</dbReference>
<dbReference type="GO" id="GO:0015969">
    <property type="term" value="P:guanosine tetraphosphate metabolic process"/>
    <property type="evidence" value="ECO:0000318"/>
    <property type="project" value="GO_Central"/>
</dbReference>
<dbReference type="GO" id="GO:0015949">
    <property type="term" value="P:nucleobase-containing small molecule interconversion"/>
    <property type="evidence" value="ECO:0000315"/>
    <property type="project" value="EcoCyc"/>
</dbReference>
<dbReference type="GO" id="GO:0042594">
    <property type="term" value="P:response to starvation"/>
    <property type="evidence" value="ECO:0000318"/>
    <property type="project" value="GO_Central"/>
</dbReference>
<dbReference type="CDD" id="cd04876">
    <property type="entry name" value="ACT_RelA-SpoT"/>
    <property type="match status" value="1"/>
</dbReference>
<dbReference type="CDD" id="cd00077">
    <property type="entry name" value="HDc"/>
    <property type="match status" value="1"/>
</dbReference>
<dbReference type="CDD" id="cd05399">
    <property type="entry name" value="NT_Rel-Spo_like"/>
    <property type="match status" value="1"/>
</dbReference>
<dbReference type="CDD" id="cd01668">
    <property type="entry name" value="TGS_RSH"/>
    <property type="match status" value="1"/>
</dbReference>
<dbReference type="FunFam" id="3.30.70.260:FF:000006">
    <property type="entry name" value="(P)ppGpp synthase/hydrolase SpoT"/>
    <property type="match status" value="1"/>
</dbReference>
<dbReference type="FunFam" id="3.10.20.30:FF:000002">
    <property type="entry name" value="GTP pyrophosphokinase (RelA/SpoT)"/>
    <property type="match status" value="1"/>
</dbReference>
<dbReference type="FunFam" id="1.10.3210.10:FF:000001">
    <property type="entry name" value="GTP pyrophosphokinase RelA"/>
    <property type="match status" value="1"/>
</dbReference>
<dbReference type="FunFam" id="3.30.460.10:FF:000001">
    <property type="entry name" value="GTP pyrophosphokinase RelA"/>
    <property type="match status" value="1"/>
</dbReference>
<dbReference type="Gene3D" id="3.10.20.30">
    <property type="match status" value="1"/>
</dbReference>
<dbReference type="Gene3D" id="3.30.70.260">
    <property type="match status" value="1"/>
</dbReference>
<dbReference type="Gene3D" id="3.30.460.10">
    <property type="entry name" value="Beta Polymerase, domain 2"/>
    <property type="match status" value="1"/>
</dbReference>
<dbReference type="Gene3D" id="1.10.3210.10">
    <property type="entry name" value="Hypothetical protein af1432"/>
    <property type="match status" value="1"/>
</dbReference>
<dbReference type="InterPro" id="IPR045865">
    <property type="entry name" value="ACT-like_dom_sf"/>
</dbReference>
<dbReference type="InterPro" id="IPR002912">
    <property type="entry name" value="ACT_dom"/>
</dbReference>
<dbReference type="InterPro" id="IPR012675">
    <property type="entry name" value="Beta-grasp_dom_sf"/>
</dbReference>
<dbReference type="InterPro" id="IPR003607">
    <property type="entry name" value="HD/PDEase_dom"/>
</dbReference>
<dbReference type="InterPro" id="IPR006674">
    <property type="entry name" value="HD_domain"/>
</dbReference>
<dbReference type="InterPro" id="IPR043519">
    <property type="entry name" value="NT_sf"/>
</dbReference>
<dbReference type="InterPro" id="IPR004811">
    <property type="entry name" value="RelA/Spo_fam"/>
</dbReference>
<dbReference type="InterPro" id="IPR045600">
    <property type="entry name" value="RelA/SpoT_AH_RIS"/>
</dbReference>
<dbReference type="InterPro" id="IPR007685">
    <property type="entry name" value="RelA_SpoT"/>
</dbReference>
<dbReference type="InterPro" id="IPR004095">
    <property type="entry name" value="TGS"/>
</dbReference>
<dbReference type="InterPro" id="IPR012676">
    <property type="entry name" value="TGS-like"/>
</dbReference>
<dbReference type="InterPro" id="IPR033655">
    <property type="entry name" value="TGS_RelA/SpoT"/>
</dbReference>
<dbReference type="NCBIfam" id="NF008303">
    <property type="entry name" value="PRK11092.1"/>
    <property type="match status" value="1"/>
</dbReference>
<dbReference type="NCBIfam" id="TIGR00691">
    <property type="entry name" value="spoT_relA"/>
    <property type="match status" value="1"/>
</dbReference>
<dbReference type="PANTHER" id="PTHR21262:SF36">
    <property type="entry name" value="BIFUNCTIONAL (P)PPGPP SYNTHASE_HYDROLASE SPOT"/>
    <property type="match status" value="1"/>
</dbReference>
<dbReference type="PANTHER" id="PTHR21262">
    <property type="entry name" value="GUANOSINE-3',5'-BIS DIPHOSPHATE 3'-PYROPHOSPHOHYDROLASE"/>
    <property type="match status" value="1"/>
</dbReference>
<dbReference type="Pfam" id="PF13291">
    <property type="entry name" value="ACT_4"/>
    <property type="match status" value="1"/>
</dbReference>
<dbReference type="Pfam" id="PF13328">
    <property type="entry name" value="HD_4"/>
    <property type="match status" value="1"/>
</dbReference>
<dbReference type="Pfam" id="PF19296">
    <property type="entry name" value="RelA_AH_RIS"/>
    <property type="match status" value="1"/>
</dbReference>
<dbReference type="Pfam" id="PF04607">
    <property type="entry name" value="RelA_SpoT"/>
    <property type="match status" value="1"/>
</dbReference>
<dbReference type="Pfam" id="PF02824">
    <property type="entry name" value="TGS"/>
    <property type="match status" value="1"/>
</dbReference>
<dbReference type="SMART" id="SM00471">
    <property type="entry name" value="HDc"/>
    <property type="match status" value="1"/>
</dbReference>
<dbReference type="SMART" id="SM00954">
    <property type="entry name" value="RelA_SpoT"/>
    <property type="match status" value="1"/>
</dbReference>
<dbReference type="SUPFAM" id="SSF55021">
    <property type="entry name" value="ACT-like"/>
    <property type="match status" value="1"/>
</dbReference>
<dbReference type="SUPFAM" id="SSF109604">
    <property type="entry name" value="HD-domain/PDEase-like"/>
    <property type="match status" value="1"/>
</dbReference>
<dbReference type="SUPFAM" id="SSF81301">
    <property type="entry name" value="Nucleotidyltransferase"/>
    <property type="match status" value="1"/>
</dbReference>
<dbReference type="SUPFAM" id="SSF81271">
    <property type="entry name" value="TGS-like"/>
    <property type="match status" value="1"/>
</dbReference>
<dbReference type="PROSITE" id="PS51671">
    <property type="entry name" value="ACT"/>
    <property type="match status" value="1"/>
</dbReference>
<dbReference type="PROSITE" id="PS51831">
    <property type="entry name" value="HD"/>
    <property type="match status" value="1"/>
</dbReference>
<dbReference type="PROSITE" id="PS51880">
    <property type="entry name" value="TGS"/>
    <property type="match status" value="1"/>
</dbReference>
<reference key="1">
    <citation type="journal article" date="1989" name="J. Biol. Chem.">
        <title>Characterization of the spoT gene of Escherichia coli.</title>
        <authorList>
            <person name="Sarubbi E."/>
            <person name="Rudd K.E."/>
            <person name="Xiao H."/>
            <person name="Ikehara K."/>
            <person name="Kalman M."/>
            <person name="Cashel M."/>
        </authorList>
    </citation>
    <scope>NUCLEOTIDE SEQUENCE [GENOMIC DNA]</scope>
</reference>
<reference key="2">
    <citation type="journal article" date="1993" name="Genomics">
        <title>DNA sequence and analysis of 136 kilobases of the Escherichia coli genome: organizational symmetry around the origin of replication.</title>
        <authorList>
            <person name="Burland V.D."/>
            <person name="Plunkett G. III"/>
            <person name="Daniels D.L."/>
            <person name="Blattner F.R."/>
        </authorList>
    </citation>
    <scope>NUCLEOTIDE SEQUENCE [LARGE SCALE GENOMIC DNA]</scope>
    <source>
        <strain>K12 / MG1655 / ATCC 47076</strain>
    </source>
</reference>
<reference key="3">
    <citation type="journal article" date="1997" name="Science">
        <title>The complete genome sequence of Escherichia coli K-12.</title>
        <authorList>
            <person name="Blattner F.R."/>
            <person name="Plunkett G. III"/>
            <person name="Bloch C.A."/>
            <person name="Perna N.T."/>
            <person name="Burland V."/>
            <person name="Riley M."/>
            <person name="Collado-Vides J."/>
            <person name="Glasner J.D."/>
            <person name="Rode C.K."/>
            <person name="Mayhew G.F."/>
            <person name="Gregor J."/>
            <person name="Davis N.W."/>
            <person name="Kirkpatrick H.A."/>
            <person name="Goeden M.A."/>
            <person name="Rose D.J."/>
            <person name="Mau B."/>
            <person name="Shao Y."/>
        </authorList>
    </citation>
    <scope>NUCLEOTIDE SEQUENCE [LARGE SCALE GENOMIC DNA]</scope>
    <source>
        <strain>K12 / MG1655 / ATCC 47076</strain>
    </source>
</reference>
<reference key="4">
    <citation type="journal article" date="2006" name="Mol. Syst. Biol.">
        <title>Highly accurate genome sequences of Escherichia coli K-12 strains MG1655 and W3110.</title>
        <authorList>
            <person name="Hayashi K."/>
            <person name="Morooka N."/>
            <person name="Yamamoto Y."/>
            <person name="Fujita K."/>
            <person name="Isono K."/>
            <person name="Choi S."/>
            <person name="Ohtsubo E."/>
            <person name="Baba T."/>
            <person name="Wanner B.L."/>
            <person name="Mori H."/>
            <person name="Horiuchi T."/>
        </authorList>
    </citation>
    <scope>NUCLEOTIDE SEQUENCE [LARGE SCALE GENOMIC DNA]</scope>
    <source>
        <strain>K12 / W3110 / ATCC 27325 / DSM 5911</strain>
    </source>
</reference>
<reference key="5">
    <citation type="journal article" date="1991" name="J. Biol. Chem.">
        <title>Residual guanosine 3',5'-bispyrophosphate synthetic activity of relA null mutants can be eliminated by spoT null mutations.</title>
        <authorList>
            <person name="Xiao H."/>
            <person name="Kalman M."/>
            <person name="Ikehara K."/>
            <person name="Zemel S."/>
            <person name="Glaser G."/>
            <person name="Cashel M."/>
        </authorList>
    </citation>
    <scope>PROBABLE (P)PPGPP SYNTHESIS ACTIVITY</scope>
</reference>
<reference key="6">
    <citation type="journal article" date="2002" name="Biosci. Biotechnol. Biochem.">
        <title>Identification of an indispensable amino acid for ppGpp synthesis of Escherichia coli SpoT protein.</title>
        <authorList>
            <person name="Fujita C."/>
            <person name="Maeda M."/>
            <person name="Fujii T."/>
            <person name="Iwamoto R."/>
            <person name="Ikehara K."/>
        </authorList>
    </citation>
    <scope>PPGPP SYNTHASE ACTIVITY</scope>
    <scope>MUTAGENESIS OF ASP-293</scope>
    <source>
        <strain>CF8295</strain>
    </source>
</reference>
<reference key="7">
    <citation type="journal article" date="2003" name="Mol. Microbiol.">
        <title>Characterization of the hipA7 allele of Escherichia coli and evidence that high persistence is governed by (p)ppGpp synthesis.</title>
        <authorList>
            <person name="Korch S.B."/>
            <person name="Henderson T.A."/>
            <person name="Hill T.M."/>
        </authorList>
    </citation>
    <scope>FUNCTION IN PERSISTENCE</scope>
    <scope>DISRUPTION PHENOTYPE</scope>
    <source>
        <strain>K12 / MG1655 / ATCC 47076</strain>
    </source>
</reference>
<reference key="8">
    <citation type="journal article" date="2004" name="J. Bacteriol.">
        <title>The Escherichia coli GTPase CgtAE cofractionates with the 50S ribosomal subunit and interacts with SpoT, a ppGpp synthetase/hydrolase.</title>
        <authorList>
            <person name="Wout P."/>
            <person name="Pu K."/>
            <person name="Sullivan S.M."/>
            <person name="Reese V."/>
            <person name="Zhou S."/>
            <person name="Lin B."/>
            <person name="Maddock J.R."/>
        </authorList>
    </citation>
    <scope>INTERACTION WITH OBGE/CGTA</scope>
    <source>
        <strain>K12 / W3110 / ATCC 27325 / DSM 5911</strain>
    </source>
</reference>
<reference key="9">
    <citation type="journal article" date="2007" name="J. Bacteriol.">
        <title>G-protein control of the ribosome-associated stress response protein SpoT.</title>
        <authorList>
            <person name="Jiang M."/>
            <person name="Sullivan S.M."/>
            <person name="Wout P.K."/>
            <person name="Maddock J.R."/>
        </authorList>
    </citation>
    <scope>SUBCELLULAR LOCATION</scope>
    <scope>LARGE RIBOSOMAL SUBUNIT ASSOCIATION</scope>
    <scope>CHARACTERIZATION UNDER AMINO ACID OR CARBON STARVATION</scope>
    <source>
        <strain>K12</strain>
    </source>
</reference>
<reference key="10">
    <citation type="journal article" date="2009" name="Mol. Microbiol.">
        <title>Second messenger signalling governs Escherichia coli biofilm induction upon ribosomal stress.</title>
        <authorList>
            <person name="Boehm A."/>
            <person name="Steiner S."/>
            <person name="Zaehringer F."/>
            <person name="Casanova A."/>
            <person name="Hamburger F."/>
            <person name="Ritz D."/>
            <person name="Keck W."/>
            <person name="Ackermann M."/>
            <person name="Schirmer T."/>
            <person name="Jenal U."/>
        </authorList>
    </citation>
    <scope>FUNCTION IN BIOFILM FORMATION</scope>
    <scope>MUTAGENESIS OF ASP-73 AND ASP-259</scope>
    <scope>DISRUPTION PHENOTYPE</scope>
    <source>
        <strain>K12 / MG1655 / AB400</strain>
    </source>
</reference>
<reference key="11">
    <citation type="journal article" date="2011" name="Mol. Microbiol.">
        <title>Circuitry linking the Csr and stringent response global regulatory systems.</title>
        <authorList>
            <person name="Edwards A.N."/>
            <person name="Patterson-Fortin L.M."/>
            <person name="Vakulskas C.A."/>
            <person name="Mercante J.W."/>
            <person name="Potrykus K."/>
            <person name="Vinella D."/>
            <person name="Camacho M.I."/>
            <person name="Fields J.A."/>
            <person name="Thompson S.A."/>
            <person name="Georgellis D."/>
            <person name="Cashel M."/>
            <person name="Babitzke P."/>
            <person name="Romeo T."/>
        </authorList>
    </citation>
    <scope>FUNCTION</scope>
    <scope>DISRUPTION PHENOTYPE</scope>
    <source>
        <strain>K12 / CF7789</strain>
        <strain>K12 / MG1655 / ATCC 47076</strain>
    </source>
</reference>
<reference key="12">
    <citation type="journal article" date="2015" name="Mol. Cell">
        <title>Obg and membrane depolarization are part of a microbial bet-hedging strategy that leads to antibiotic tolerance.</title>
        <authorList>
            <person name="Verstraeten N."/>
            <person name="Knapen W.J."/>
            <person name="Kint C.I."/>
            <person name="Liebens V."/>
            <person name="Van den Bergh B."/>
            <person name="Dewachter L."/>
            <person name="Michiels J.E."/>
            <person name="Fu Q."/>
            <person name="David C.C."/>
            <person name="Fierro A.C."/>
            <person name="Marchal K."/>
            <person name="Beirlant J."/>
            <person name="Versees W."/>
            <person name="Hofkens J."/>
            <person name="Jansen M."/>
            <person name="Fauvart M."/>
            <person name="Michiels J."/>
        </authorList>
    </citation>
    <scope>FUNCTION IN PERSISTENCE</scope>
    <scope>DISRUPTION PHENOTYPE</scope>
    <source>
        <strain>K12 / BW25113</strain>
    </source>
</reference>
<gene>
    <name type="primary">spoT</name>
    <name type="ordered locus">b3650</name>
    <name type="ordered locus">JW3625</name>
</gene>
<keyword id="KW-0963">Cytoplasm</keyword>
<keyword id="KW-0378">Hydrolase</keyword>
<keyword id="KW-0418">Kinase</keyword>
<keyword id="KW-0464">Manganese</keyword>
<keyword id="KW-1185">Reference proteome</keyword>
<keyword id="KW-0808">Transferase</keyword>